<proteinExistence type="evidence at protein level"/>
<feature type="chain" id="PRO_0000459719" description="UDP-N-acetyl-3-dehydro-alpha-D-glucosamine 3-aminotranferase">
    <location>
        <begin position="1"/>
        <end position="369"/>
    </location>
</feature>
<feature type="modified residue" description="N6-(pyridoxal phosphate)lysine" evidence="1">
    <location>
        <position position="190"/>
    </location>
</feature>
<feature type="mutagenesis site" description="Loss of activity." evidence="2">
    <original>K</original>
    <variation>A</variation>
    <location>
        <position position="190"/>
    </location>
</feature>
<sequence length="369" mass="39803">MTQNTAIPMVDLRAHFAPLRDEILTGIGKILDDASFILGNQGRALEAEVAGLSGVAHGVGCASGTDALMLALRALEIGPGDEVIVPTFTFIATAEAVLYVGATPVFVDVDDRFYAMTIAGIEAAITPRTKAIIPVHLYGLPADMPGIMALAQKHGLRVIEDCAQAIGAQINGQGVGSFGDIGCFSFFPSKNLGAAGDGGMVVTADAELERKLRGLRNHGSWQTYHHDVLGYNSRLDEMQAVILRAEFPHLAAYNDGRRRAAGWYAEHLVGLDLQLPEAPAGYHHVFHQFTIQLNARDAVKTALHAEGIASAIYYPIPGHQQKMFAHQAQTHCPVAEHLAERVLSLPMFPELREEQIARIATVIRRTLHG</sequence>
<comment type="function">
    <text evidence="2">Aminotranferase involved in the synthesis of 2,3-diamino-2,3-dideoxy-D-glucopyranose (GlcN3N), which is a component of lipid A in some species (PubMed:15044494). Catalyzes the amination of UDP-2-acetamido-3-dehydro-2-deoxy-alpha-D-glucopyranose (UDP-3-oxo-GlcNAc) to UDP-2-acetamido-3-amino-2,3-dideoxy-alpha-D-glucopyranose (UDP-GlcNAc3N), using L-glutamate as the amine donor (PubMed:15044494). Other amine donors, such as alanine and glutamine, can substitute for glutamate, but product formation is slower (PubMed:15044494).</text>
</comment>
<comment type="catalytic activity">
    <reaction evidence="2">
        <text>UDP-2-acetamido-3-amino-2,3-dideoxy-alpha-D-glucopyranose + 2-oxoglutarate = UDP-2-acetamido-3-dehydro-2-deoxy-alpha-D-glucopyranose + L-glutamate</text>
        <dbReference type="Rhea" id="RHEA:69468"/>
        <dbReference type="ChEBI" id="CHEBI:16810"/>
        <dbReference type="ChEBI" id="CHEBI:29985"/>
        <dbReference type="ChEBI" id="CHEBI:78981"/>
        <dbReference type="ChEBI" id="CHEBI:184123"/>
        <dbReference type="EC" id="2.6.1.122"/>
    </reaction>
    <physiologicalReaction direction="right-to-left" evidence="2">
        <dbReference type="Rhea" id="RHEA:69470"/>
    </physiologicalReaction>
</comment>
<comment type="cofactor">
    <cofactor evidence="2">
        <name>pyridoxal 5'-phosphate</name>
        <dbReference type="ChEBI" id="CHEBI:597326"/>
    </cofactor>
</comment>
<comment type="pathway">
    <text evidence="5">Bacterial outer membrane biogenesis; LPS lipid A biosynthesis.</text>
</comment>
<comment type="similarity">
    <text evidence="4">Belongs to the DegT/DnrJ/EryC1 family.</text>
</comment>
<gene>
    <name evidence="3" type="primary">gnnB</name>
    <name evidence="6" type="ordered locus">AFE_1458</name>
</gene>
<protein>
    <recommendedName>
        <fullName evidence="4">UDP-N-acetyl-3-dehydro-alpha-D-glucosamine 3-aminotranferase</fullName>
        <ecNumber evidence="2">2.6.1.122</ecNumber>
    </recommendedName>
</protein>
<dbReference type="EC" id="2.6.1.122" evidence="2"/>
<dbReference type="EMBL" id="AY541062">
    <property type="protein sequence ID" value="AAS48422.1"/>
    <property type="molecule type" value="Genomic_DNA"/>
</dbReference>
<dbReference type="EMBL" id="CP001219">
    <property type="protein sequence ID" value="ACK78135.1"/>
    <property type="molecule type" value="Genomic_DNA"/>
</dbReference>
<dbReference type="RefSeq" id="WP_012536534.1">
    <property type="nucleotide sequence ID" value="NC_011761.1"/>
</dbReference>
<dbReference type="SMR" id="B7JA35"/>
<dbReference type="STRING" id="243159.AFE_1458"/>
<dbReference type="PaxDb" id="243159-AFE_1458"/>
<dbReference type="GeneID" id="65280679"/>
<dbReference type="KEGG" id="afr:AFE_1458"/>
<dbReference type="eggNOG" id="COG0399">
    <property type="taxonomic scope" value="Bacteria"/>
</dbReference>
<dbReference type="HOGENOM" id="CLU_033332_7_2_6"/>
<dbReference type="UniPathway" id="UPA00973"/>
<dbReference type="Proteomes" id="UP000001362">
    <property type="component" value="Chromosome"/>
</dbReference>
<dbReference type="GO" id="GO:0016020">
    <property type="term" value="C:membrane"/>
    <property type="evidence" value="ECO:0007669"/>
    <property type="project" value="GOC"/>
</dbReference>
<dbReference type="GO" id="GO:0030170">
    <property type="term" value="F:pyridoxal phosphate binding"/>
    <property type="evidence" value="ECO:0007669"/>
    <property type="project" value="TreeGrafter"/>
</dbReference>
<dbReference type="GO" id="GO:0008483">
    <property type="term" value="F:transaminase activity"/>
    <property type="evidence" value="ECO:0007669"/>
    <property type="project" value="UniProtKB-KW"/>
</dbReference>
<dbReference type="GO" id="GO:0009245">
    <property type="term" value="P:lipid A biosynthetic process"/>
    <property type="evidence" value="ECO:0007669"/>
    <property type="project" value="UniProtKB-UniPathway"/>
</dbReference>
<dbReference type="GO" id="GO:0000271">
    <property type="term" value="P:polysaccharide biosynthetic process"/>
    <property type="evidence" value="ECO:0007669"/>
    <property type="project" value="TreeGrafter"/>
</dbReference>
<dbReference type="CDD" id="cd00616">
    <property type="entry name" value="AHBA_syn"/>
    <property type="match status" value="1"/>
</dbReference>
<dbReference type="FunFam" id="3.40.640.10:FF:000089">
    <property type="entry name" value="Aminotransferase, DegT/DnrJ/EryC1/StrS family"/>
    <property type="match status" value="1"/>
</dbReference>
<dbReference type="Gene3D" id="3.90.1150.10">
    <property type="entry name" value="Aspartate Aminotransferase, domain 1"/>
    <property type="match status" value="1"/>
</dbReference>
<dbReference type="Gene3D" id="3.40.640.10">
    <property type="entry name" value="Type I PLP-dependent aspartate aminotransferase-like (Major domain)"/>
    <property type="match status" value="1"/>
</dbReference>
<dbReference type="InterPro" id="IPR000653">
    <property type="entry name" value="DegT/StrS_aminotransferase"/>
</dbReference>
<dbReference type="InterPro" id="IPR015424">
    <property type="entry name" value="PyrdxlP-dep_Trfase"/>
</dbReference>
<dbReference type="InterPro" id="IPR015421">
    <property type="entry name" value="PyrdxlP-dep_Trfase_major"/>
</dbReference>
<dbReference type="InterPro" id="IPR015422">
    <property type="entry name" value="PyrdxlP-dep_Trfase_small"/>
</dbReference>
<dbReference type="PANTHER" id="PTHR30244:SF36">
    <property type="entry name" value="3-OXO-GLUCOSE-6-PHOSPHATE:GLUTAMATE AMINOTRANSFERASE"/>
    <property type="match status" value="1"/>
</dbReference>
<dbReference type="PANTHER" id="PTHR30244">
    <property type="entry name" value="TRANSAMINASE"/>
    <property type="match status" value="1"/>
</dbReference>
<dbReference type="Pfam" id="PF01041">
    <property type="entry name" value="DegT_DnrJ_EryC1"/>
    <property type="match status" value="1"/>
</dbReference>
<dbReference type="PIRSF" id="PIRSF000390">
    <property type="entry name" value="PLP_StrS"/>
    <property type="match status" value="1"/>
</dbReference>
<dbReference type="SUPFAM" id="SSF53383">
    <property type="entry name" value="PLP-dependent transferases"/>
    <property type="match status" value="1"/>
</dbReference>
<organism>
    <name type="scientific">Acidithiobacillus ferrooxidans (strain ATCC 23270 / DSM 14882 / CIP 104768 / NCIMB 8455)</name>
    <name type="common">Ferrobacillus ferrooxidans (strain ATCC 23270)</name>
    <dbReference type="NCBI Taxonomy" id="243159"/>
    <lineage>
        <taxon>Bacteria</taxon>
        <taxon>Pseudomonadati</taxon>
        <taxon>Pseudomonadota</taxon>
        <taxon>Acidithiobacillia</taxon>
        <taxon>Acidithiobacillales</taxon>
        <taxon>Acidithiobacillaceae</taxon>
        <taxon>Acidithiobacillus</taxon>
    </lineage>
</organism>
<keyword id="KW-0032">Aminotransferase</keyword>
<keyword id="KW-0441">Lipid A biosynthesis</keyword>
<keyword id="KW-0444">Lipid biosynthesis</keyword>
<keyword id="KW-0443">Lipid metabolism</keyword>
<keyword id="KW-0663">Pyridoxal phosphate</keyword>
<keyword id="KW-1185">Reference proteome</keyword>
<keyword id="KW-0808">Transferase</keyword>
<reference key="1">
    <citation type="journal article" date="2004" name="J. Biol. Chem.">
        <title>Oxidation and transamination of the 3-position of UDP-N-acetylglucosamine by enzymes from Acidithiobacillus ferrooxidans. Role in the formation of lipid a molecules with four amide-linked acyl chains.</title>
        <authorList>
            <person name="Sweet C.R."/>
            <person name="Ribeiro A.A."/>
            <person name="Raetz C.R.H."/>
        </authorList>
    </citation>
    <scope>NUCLEOTIDE SEQUENCE [GENOMIC DNA]</scope>
    <scope>FUNCTION</scope>
    <scope>CATALYTIC ACTIVITY</scope>
    <scope>COFACTOR</scope>
    <scope>MUTAGENESIS OF LYS-190</scope>
    <source>
        <strain>ATCC 23270 / DSM 14882 / CIP 104768 / NCIMB 8455</strain>
    </source>
</reference>
<reference key="2">
    <citation type="journal article" date="2008" name="BMC Genomics">
        <title>Acidithiobacillus ferrooxidans metabolism: from genome sequence to industrial applications.</title>
        <authorList>
            <person name="Valdes J."/>
            <person name="Pedroso I."/>
            <person name="Quatrini R."/>
            <person name="Dodson R.J."/>
            <person name="Tettelin H."/>
            <person name="Blake R. II"/>
            <person name="Eisen J.A."/>
            <person name="Holmes D.S."/>
        </authorList>
    </citation>
    <scope>NUCLEOTIDE SEQUENCE [LARGE SCALE GENOMIC DNA]</scope>
    <source>
        <strain>ATCC 23270 / DSM 14882 / CIP 104768 / NCIMB 8455</strain>
    </source>
</reference>
<accession>B7JA35</accession>
<name>GNNB_ACIF2</name>
<evidence type="ECO:0000250" key="1">
    <source>
        <dbReference type="UniProtKB" id="Q9HZ76"/>
    </source>
</evidence>
<evidence type="ECO:0000269" key="2">
    <source>
    </source>
</evidence>
<evidence type="ECO:0000303" key="3">
    <source>
    </source>
</evidence>
<evidence type="ECO:0000305" key="4"/>
<evidence type="ECO:0000305" key="5">
    <source>
    </source>
</evidence>
<evidence type="ECO:0000312" key="6">
    <source>
        <dbReference type="EMBL" id="ACK78135.1"/>
    </source>
</evidence>